<proteinExistence type="inferred from homology"/>
<accession>Q5YNS3</accession>
<name>THIC_NOCFA</name>
<reference key="1">
    <citation type="journal article" date="2004" name="Proc. Natl. Acad. Sci. U.S.A.">
        <title>The complete genomic sequence of Nocardia farcinica IFM 10152.</title>
        <authorList>
            <person name="Ishikawa J."/>
            <person name="Yamashita A."/>
            <person name="Mikami Y."/>
            <person name="Hoshino Y."/>
            <person name="Kurita H."/>
            <person name="Hotta K."/>
            <person name="Shiba T."/>
            <person name="Hattori M."/>
        </authorList>
    </citation>
    <scope>NUCLEOTIDE SEQUENCE [LARGE SCALE GENOMIC DNA]</scope>
    <source>
        <strain>IFM 10152</strain>
    </source>
</reference>
<keyword id="KW-0004">4Fe-4S</keyword>
<keyword id="KW-0408">Iron</keyword>
<keyword id="KW-0411">Iron-sulfur</keyword>
<keyword id="KW-0456">Lyase</keyword>
<keyword id="KW-0479">Metal-binding</keyword>
<keyword id="KW-1185">Reference proteome</keyword>
<keyword id="KW-0949">S-adenosyl-L-methionine</keyword>
<keyword id="KW-0784">Thiamine biosynthesis</keyword>
<keyword id="KW-0862">Zinc</keyword>
<protein>
    <recommendedName>
        <fullName evidence="1">Phosphomethylpyrimidine synthase</fullName>
        <ecNumber evidence="1">4.1.99.17</ecNumber>
    </recommendedName>
    <alternativeName>
        <fullName evidence="1">Hydroxymethylpyrimidine phosphate synthase</fullName>
        <shortName evidence="1">HMP-P synthase</shortName>
        <shortName evidence="1">HMP-phosphate synthase</shortName>
        <shortName evidence="1">HMPP synthase</shortName>
    </alternativeName>
    <alternativeName>
        <fullName evidence="1">Thiamine biosynthesis protein ThiC</fullName>
    </alternativeName>
</protein>
<evidence type="ECO:0000255" key="1">
    <source>
        <dbReference type="HAMAP-Rule" id="MF_00089"/>
    </source>
</evidence>
<dbReference type="EC" id="4.1.99.17" evidence="1"/>
<dbReference type="EMBL" id="AP006618">
    <property type="protein sequence ID" value="BAD60168.1"/>
    <property type="molecule type" value="Genomic_DNA"/>
</dbReference>
<dbReference type="RefSeq" id="WP_011211850.1">
    <property type="nucleotide sequence ID" value="NC_006361.1"/>
</dbReference>
<dbReference type="SMR" id="Q5YNS3"/>
<dbReference type="STRING" id="247156.NFA_53160"/>
<dbReference type="GeneID" id="61135891"/>
<dbReference type="KEGG" id="nfa:NFA_53160"/>
<dbReference type="eggNOG" id="COG0422">
    <property type="taxonomic scope" value="Bacteria"/>
</dbReference>
<dbReference type="HOGENOM" id="CLU_013181_2_1_11"/>
<dbReference type="OrthoDB" id="9805897at2"/>
<dbReference type="UniPathway" id="UPA00060"/>
<dbReference type="Proteomes" id="UP000006820">
    <property type="component" value="Chromosome"/>
</dbReference>
<dbReference type="GO" id="GO:0005829">
    <property type="term" value="C:cytosol"/>
    <property type="evidence" value="ECO:0007669"/>
    <property type="project" value="TreeGrafter"/>
</dbReference>
<dbReference type="GO" id="GO:0051539">
    <property type="term" value="F:4 iron, 4 sulfur cluster binding"/>
    <property type="evidence" value="ECO:0007669"/>
    <property type="project" value="UniProtKB-KW"/>
</dbReference>
<dbReference type="GO" id="GO:0016830">
    <property type="term" value="F:carbon-carbon lyase activity"/>
    <property type="evidence" value="ECO:0007669"/>
    <property type="project" value="InterPro"/>
</dbReference>
<dbReference type="GO" id="GO:0008270">
    <property type="term" value="F:zinc ion binding"/>
    <property type="evidence" value="ECO:0007669"/>
    <property type="project" value="UniProtKB-UniRule"/>
</dbReference>
<dbReference type="GO" id="GO:0009228">
    <property type="term" value="P:thiamine biosynthetic process"/>
    <property type="evidence" value="ECO:0007669"/>
    <property type="project" value="UniProtKB-KW"/>
</dbReference>
<dbReference type="GO" id="GO:0009229">
    <property type="term" value="P:thiamine diphosphate biosynthetic process"/>
    <property type="evidence" value="ECO:0007669"/>
    <property type="project" value="UniProtKB-UniRule"/>
</dbReference>
<dbReference type="FunFam" id="3.20.20.540:FF:000001">
    <property type="entry name" value="Phosphomethylpyrimidine synthase"/>
    <property type="match status" value="1"/>
</dbReference>
<dbReference type="Gene3D" id="6.10.250.620">
    <property type="match status" value="1"/>
</dbReference>
<dbReference type="Gene3D" id="3.20.20.540">
    <property type="entry name" value="Radical SAM ThiC family, central domain"/>
    <property type="match status" value="1"/>
</dbReference>
<dbReference type="HAMAP" id="MF_00089">
    <property type="entry name" value="ThiC"/>
    <property type="match status" value="1"/>
</dbReference>
<dbReference type="InterPro" id="IPR037509">
    <property type="entry name" value="ThiC"/>
</dbReference>
<dbReference type="InterPro" id="IPR025747">
    <property type="entry name" value="ThiC-associated_dom"/>
</dbReference>
<dbReference type="InterPro" id="IPR038521">
    <property type="entry name" value="ThiC/Bza_core_dom"/>
</dbReference>
<dbReference type="InterPro" id="IPR002817">
    <property type="entry name" value="ThiC/BzaA/B"/>
</dbReference>
<dbReference type="NCBIfam" id="NF006763">
    <property type="entry name" value="PRK09284.1"/>
    <property type="match status" value="1"/>
</dbReference>
<dbReference type="NCBIfam" id="NF009895">
    <property type="entry name" value="PRK13352.1"/>
    <property type="match status" value="1"/>
</dbReference>
<dbReference type="NCBIfam" id="TIGR00190">
    <property type="entry name" value="thiC"/>
    <property type="match status" value="1"/>
</dbReference>
<dbReference type="PANTHER" id="PTHR30557:SF1">
    <property type="entry name" value="PHOSPHOMETHYLPYRIMIDINE SYNTHASE, CHLOROPLASTIC"/>
    <property type="match status" value="1"/>
</dbReference>
<dbReference type="PANTHER" id="PTHR30557">
    <property type="entry name" value="THIAMINE BIOSYNTHESIS PROTEIN THIC"/>
    <property type="match status" value="1"/>
</dbReference>
<dbReference type="Pfam" id="PF13667">
    <property type="entry name" value="ThiC-associated"/>
    <property type="match status" value="1"/>
</dbReference>
<dbReference type="Pfam" id="PF01964">
    <property type="entry name" value="ThiC_Rad_SAM"/>
    <property type="match status" value="1"/>
</dbReference>
<dbReference type="SFLD" id="SFLDF00407">
    <property type="entry name" value="phosphomethylpyrimidine_syntha"/>
    <property type="match status" value="1"/>
</dbReference>
<dbReference type="SFLD" id="SFLDG01114">
    <property type="entry name" value="phosphomethylpyrimidine_syntha"/>
    <property type="match status" value="1"/>
</dbReference>
<dbReference type="SFLD" id="SFLDS00113">
    <property type="entry name" value="Radical_SAM_Phosphomethylpyrim"/>
    <property type="match status" value="1"/>
</dbReference>
<comment type="function">
    <text evidence="1">Catalyzes the synthesis of the hydroxymethylpyrimidine phosphate (HMP-P) moiety of thiamine from aminoimidazole ribotide (AIR) in a radical S-adenosyl-L-methionine (SAM)-dependent reaction.</text>
</comment>
<comment type="catalytic activity">
    <reaction evidence="1">
        <text>5-amino-1-(5-phospho-beta-D-ribosyl)imidazole + S-adenosyl-L-methionine = 4-amino-2-methyl-5-(phosphooxymethyl)pyrimidine + CO + 5'-deoxyadenosine + formate + L-methionine + 3 H(+)</text>
        <dbReference type="Rhea" id="RHEA:24840"/>
        <dbReference type="ChEBI" id="CHEBI:15378"/>
        <dbReference type="ChEBI" id="CHEBI:15740"/>
        <dbReference type="ChEBI" id="CHEBI:17245"/>
        <dbReference type="ChEBI" id="CHEBI:17319"/>
        <dbReference type="ChEBI" id="CHEBI:57844"/>
        <dbReference type="ChEBI" id="CHEBI:58354"/>
        <dbReference type="ChEBI" id="CHEBI:59789"/>
        <dbReference type="ChEBI" id="CHEBI:137981"/>
        <dbReference type="EC" id="4.1.99.17"/>
    </reaction>
</comment>
<comment type="cofactor">
    <cofactor evidence="1">
        <name>[4Fe-4S] cluster</name>
        <dbReference type="ChEBI" id="CHEBI:49883"/>
    </cofactor>
    <text evidence="1">Binds 1 [4Fe-4S] cluster per subunit. The cluster is coordinated with 3 cysteines and an exchangeable S-adenosyl-L-methionine.</text>
</comment>
<comment type="pathway">
    <text evidence="1">Cofactor biosynthesis; thiamine diphosphate biosynthesis.</text>
</comment>
<comment type="similarity">
    <text evidence="1">Belongs to the ThiC family.</text>
</comment>
<sequence length="547" mass="59777">MASADRVTAPVDTVTTGPIEGSVKHYREVDGLRIPVRRINLTNGETFDVYDTSGPYTDENATIDLEAGLPKLRDSWDKPTVAGPRTQLAWARAGIVTPEMRFIAAREGVEPELVRAEVAAGRAVIPANHNHPELEPTIIGKKFLVKINANIGNSAVSSSIAEEVEKMVWATRWGADTIMDLSTGKNIHETREWILRNSPVPVGTVPIYQALEKVNGDPAALTWEIYRDTVIEQAEQGVDYMTVHAGVLLRYVPLTAKRVTGIVSRGGSIMAAWCLAHHRESFLYTHFEELCEILARYDVTFSLGDGLRPGSVADANDEAQFAELRTLGELTKIAKSHGVQVMIEGPGHVPMHKIVENVRLEEELCEEAPFYTLGPLATDIAPAYDHITSAIGAAIIAQAGTAMLCYVTPKEHLGLPNRDDVKTGVITYKIAAHAADLAKGHPHAQQRDDALSKARFEFRWRDQFALSLDPDTAREYHDETMPAEPAKTAHFCSMCGPKFCSMRISADVREYAEANNLTDVAAIEAGMAAKSAEFAESGGKVYLPVVS</sequence>
<organism>
    <name type="scientific">Nocardia farcinica (strain IFM 10152)</name>
    <dbReference type="NCBI Taxonomy" id="247156"/>
    <lineage>
        <taxon>Bacteria</taxon>
        <taxon>Bacillati</taxon>
        <taxon>Actinomycetota</taxon>
        <taxon>Actinomycetes</taxon>
        <taxon>Mycobacteriales</taxon>
        <taxon>Nocardiaceae</taxon>
        <taxon>Nocardia</taxon>
    </lineage>
</organism>
<feature type="chain" id="PRO_0000242279" description="Phosphomethylpyrimidine synthase">
    <location>
        <begin position="1"/>
        <end position="547"/>
    </location>
</feature>
<feature type="binding site" evidence="1">
    <location>
        <position position="150"/>
    </location>
    <ligand>
        <name>substrate</name>
    </ligand>
</feature>
<feature type="binding site" evidence="1">
    <location>
        <position position="179"/>
    </location>
    <ligand>
        <name>substrate</name>
    </ligand>
</feature>
<feature type="binding site" evidence="1">
    <location>
        <position position="208"/>
    </location>
    <ligand>
        <name>substrate</name>
    </ligand>
</feature>
<feature type="binding site" evidence="1">
    <location>
        <position position="244"/>
    </location>
    <ligand>
        <name>substrate</name>
    </ligand>
</feature>
<feature type="binding site" evidence="1">
    <location>
        <begin position="264"/>
        <end position="266"/>
    </location>
    <ligand>
        <name>substrate</name>
    </ligand>
</feature>
<feature type="binding site" evidence="1">
    <location>
        <begin position="305"/>
        <end position="308"/>
    </location>
    <ligand>
        <name>substrate</name>
    </ligand>
</feature>
<feature type="binding site" evidence="1">
    <location>
        <position position="344"/>
    </location>
    <ligand>
        <name>substrate</name>
    </ligand>
</feature>
<feature type="binding site" evidence="1">
    <location>
        <position position="348"/>
    </location>
    <ligand>
        <name>Zn(2+)</name>
        <dbReference type="ChEBI" id="CHEBI:29105"/>
    </ligand>
</feature>
<feature type="binding site" evidence="1">
    <location>
        <position position="371"/>
    </location>
    <ligand>
        <name>substrate</name>
    </ligand>
</feature>
<feature type="binding site" evidence="1">
    <location>
        <position position="412"/>
    </location>
    <ligand>
        <name>Zn(2+)</name>
        <dbReference type="ChEBI" id="CHEBI:29105"/>
    </ligand>
</feature>
<feature type="binding site" evidence="1">
    <location>
        <position position="492"/>
    </location>
    <ligand>
        <name>[4Fe-4S] cluster</name>
        <dbReference type="ChEBI" id="CHEBI:49883"/>
        <note>4Fe-4S-S-AdoMet</note>
    </ligand>
</feature>
<feature type="binding site" evidence="1">
    <location>
        <position position="495"/>
    </location>
    <ligand>
        <name>[4Fe-4S] cluster</name>
        <dbReference type="ChEBI" id="CHEBI:49883"/>
        <note>4Fe-4S-S-AdoMet</note>
    </ligand>
</feature>
<feature type="binding site" evidence="1">
    <location>
        <position position="500"/>
    </location>
    <ligand>
        <name>[4Fe-4S] cluster</name>
        <dbReference type="ChEBI" id="CHEBI:49883"/>
        <note>4Fe-4S-S-AdoMet</note>
    </ligand>
</feature>
<gene>
    <name evidence="1" type="primary">thiC</name>
    <name type="ordered locus">NFA_53160</name>
</gene>